<reference key="1">
    <citation type="journal article" date="2000" name="Mol. Cell. Biol.">
        <title>Induction of human fetal globin gene expression by a novel erythroid factor, NF-E4.</title>
        <authorList>
            <person name="Zhou W."/>
            <person name="Clouston D.R."/>
            <person name="Wang X."/>
            <person name="Cerruti L."/>
            <person name="Cunningham J.M."/>
            <person name="Jane S.M."/>
        </authorList>
    </citation>
    <scope>NUCLEOTIDE SEQUENCE [MRNA]</scope>
    <scope>IDENTIFICATION OF NON-CANONICAL INITIATOR CODON</scope>
    <scope>FUNCTION</scope>
    <scope>TISSUE SPECIFICITY</scope>
    <scope>INTERACTION WITH TFCP2</scope>
</reference>
<reference key="2">
    <citation type="journal article" date="2003" name="Nature">
        <title>The DNA sequence of human chromosome 7.</title>
        <authorList>
            <person name="Hillier L.W."/>
            <person name="Fulton R.S."/>
            <person name="Fulton L.A."/>
            <person name="Graves T.A."/>
            <person name="Pepin K.H."/>
            <person name="Wagner-McPherson C."/>
            <person name="Layman D."/>
            <person name="Maas J."/>
            <person name="Jaeger S."/>
            <person name="Walker R."/>
            <person name="Wylie K."/>
            <person name="Sekhon M."/>
            <person name="Becker M.C."/>
            <person name="O'Laughlin M.D."/>
            <person name="Schaller M.E."/>
            <person name="Fewell G.A."/>
            <person name="Delehaunty K.D."/>
            <person name="Miner T.L."/>
            <person name="Nash W.E."/>
            <person name="Cordes M."/>
            <person name="Du H."/>
            <person name="Sun H."/>
            <person name="Edwards J."/>
            <person name="Bradshaw-Cordum H."/>
            <person name="Ali J."/>
            <person name="Andrews S."/>
            <person name="Isak A."/>
            <person name="Vanbrunt A."/>
            <person name="Nguyen C."/>
            <person name="Du F."/>
            <person name="Lamar B."/>
            <person name="Courtney L."/>
            <person name="Kalicki J."/>
            <person name="Ozersky P."/>
            <person name="Bielicki L."/>
            <person name="Scott K."/>
            <person name="Holmes A."/>
            <person name="Harkins R."/>
            <person name="Harris A."/>
            <person name="Strong C.M."/>
            <person name="Hou S."/>
            <person name="Tomlinson C."/>
            <person name="Dauphin-Kohlberg S."/>
            <person name="Kozlowicz-Reilly A."/>
            <person name="Leonard S."/>
            <person name="Rohlfing T."/>
            <person name="Rock S.M."/>
            <person name="Tin-Wollam A.-M."/>
            <person name="Abbott A."/>
            <person name="Minx P."/>
            <person name="Maupin R."/>
            <person name="Strowmatt C."/>
            <person name="Latreille P."/>
            <person name="Miller N."/>
            <person name="Johnson D."/>
            <person name="Murray J."/>
            <person name="Woessner J.P."/>
            <person name="Wendl M.C."/>
            <person name="Yang S.-P."/>
            <person name="Schultz B.R."/>
            <person name="Wallis J.W."/>
            <person name="Spieth J."/>
            <person name="Bieri T.A."/>
            <person name="Nelson J.O."/>
            <person name="Berkowicz N."/>
            <person name="Wohldmann P.E."/>
            <person name="Cook L.L."/>
            <person name="Hickenbotham M.T."/>
            <person name="Eldred J."/>
            <person name="Williams D."/>
            <person name="Bedell J.A."/>
            <person name="Mardis E.R."/>
            <person name="Clifton S.W."/>
            <person name="Chissoe S.L."/>
            <person name="Marra M.A."/>
            <person name="Raymond C."/>
            <person name="Haugen E."/>
            <person name="Gillett W."/>
            <person name="Zhou Y."/>
            <person name="James R."/>
            <person name="Phelps K."/>
            <person name="Iadanoto S."/>
            <person name="Bubb K."/>
            <person name="Simms E."/>
            <person name="Levy R."/>
            <person name="Clendenning J."/>
            <person name="Kaul R."/>
            <person name="Kent W.J."/>
            <person name="Furey T.S."/>
            <person name="Baertsch R.A."/>
            <person name="Brent M.R."/>
            <person name="Keibler E."/>
            <person name="Flicek P."/>
            <person name="Bork P."/>
            <person name="Suyama M."/>
            <person name="Bailey J.A."/>
            <person name="Portnoy M.E."/>
            <person name="Torrents D."/>
            <person name="Chinwalla A.T."/>
            <person name="Gish W.R."/>
            <person name="Eddy S.R."/>
            <person name="McPherson J.D."/>
            <person name="Olson M.V."/>
            <person name="Eichler E.E."/>
            <person name="Green E.D."/>
            <person name="Waterston R.H."/>
            <person name="Wilson R.K."/>
        </authorList>
    </citation>
    <scope>NUCLEOTIDE SEQUENCE [LARGE SCALE GENOMIC DNA]</scope>
</reference>
<reference key="3">
    <citation type="journal article" date="2006" name="Blood">
        <title>Repression of human gamma-globin gene expression by a short isoform of the NF-E4 protein is associated with loss of NF-E2 and RNA polymerase II recruitment to the promoter.</title>
        <authorList>
            <person name="Zhao Q."/>
            <person name="Zhou W."/>
            <person name="Rank G."/>
            <person name="Sutton R."/>
            <person name="Wang X."/>
            <person name="Cumming H."/>
            <person name="Cerruti L."/>
            <person name="Cunningham J.M."/>
            <person name="Jane S.M."/>
        </authorList>
    </citation>
    <scope>PROTEIN SEQUENCE OF 101-110 (ISOFORM 2)</scope>
    <scope>ALTERNATIVE SPLICING (ISOFORM 2)</scope>
    <scope>FUNCTION</scope>
</reference>
<reference key="4">
    <citation type="journal article" date="2004" name="J. Biol. Chem.">
        <title>The role of p22 NF-E4 in human globin gene switching.</title>
        <authorList>
            <person name="Zhou W."/>
            <person name="Zhao Q."/>
            <person name="Sutton R."/>
            <person name="Cumming H."/>
            <person name="Wang X."/>
            <person name="Cerruti L."/>
            <person name="Hall M."/>
            <person name="Wu R."/>
            <person name="Cunningham J.M."/>
            <person name="Jane S.M."/>
        </authorList>
    </citation>
    <scope>FUNCTION</scope>
</reference>
<reference key="5">
    <citation type="journal article" date="2004" name="J. Biol. Chem.">
        <title>Site-specific acetylation of the fetal globin activator NF-E4 prevents its ubiquitination and regulates its interaction with the histone deacetylase, HDAC1.</title>
        <authorList>
            <person name="Zhao Q."/>
            <person name="Cumming H."/>
            <person name="Cerruti L."/>
            <person name="Cunningham J.M."/>
            <person name="Jane S.M."/>
        </authorList>
    </citation>
    <scope>INTERACTION WITH HDAC1 AND PCAF</scope>
    <scope>UBIQUITINATION</scope>
    <scope>ACETYLATION AT LYS-43</scope>
    <scope>MUTAGENESIS OF LYS-43</scope>
</reference>
<sequence length="179" mass="19019">MPRVVCWHTLKSLNGYKNLSSGAETREGLRSSSPVDLPLRPRKQATAAGQRKLLSLQLLLCACTSVTDLTYWGPAGHGATAPHRSLLAIHLHLVPASSAAMKATGPHNAQTQVNPQGHAPSAEDPTGTWTVSGPCKDHPHPFLSQSNPPTRISSALPLKTDSALEQTPQQLPSLHLSQG</sequence>
<keyword id="KW-0007">Acetylation</keyword>
<keyword id="KW-0010">Activator</keyword>
<keyword id="KW-0024">Alternative initiation</keyword>
<keyword id="KW-0903">Direct protein sequencing</keyword>
<keyword id="KW-0539">Nucleus</keyword>
<keyword id="KW-1185">Reference proteome</keyword>
<keyword id="KW-0678">Repressor</keyword>
<keyword id="KW-0804">Transcription</keyword>
<keyword id="KW-0805">Transcription regulation</keyword>
<keyword id="KW-0832">Ubl conjugation</keyword>
<gene>
    <name type="primary">NFE4</name>
</gene>
<evidence type="ECO:0000256" key="1">
    <source>
        <dbReference type="SAM" id="MobiDB-lite"/>
    </source>
</evidence>
<evidence type="ECO:0000269" key="2">
    <source>
    </source>
</evidence>
<evidence type="ECO:0000269" key="3">
    <source>
    </source>
</evidence>
<evidence type="ECO:0000269" key="4">
    <source>
    </source>
</evidence>
<evidence type="ECO:0000269" key="5">
    <source>
    </source>
</evidence>
<evidence type="ECO:0000305" key="6"/>
<organism>
    <name type="scientific">Homo sapiens</name>
    <name type="common">Human</name>
    <dbReference type="NCBI Taxonomy" id="9606"/>
    <lineage>
        <taxon>Eukaryota</taxon>
        <taxon>Metazoa</taxon>
        <taxon>Chordata</taxon>
        <taxon>Craniata</taxon>
        <taxon>Vertebrata</taxon>
        <taxon>Euteleostomi</taxon>
        <taxon>Mammalia</taxon>
        <taxon>Eutheria</taxon>
        <taxon>Euarchontoglires</taxon>
        <taxon>Primates</taxon>
        <taxon>Haplorrhini</taxon>
        <taxon>Catarrhini</taxon>
        <taxon>Hominidae</taxon>
        <taxon>Homo</taxon>
    </lineage>
</organism>
<feature type="chain" id="PRO_0000351118" description="Transcription factor NF-E4">
    <location>
        <begin position="1"/>
        <end position="179"/>
    </location>
</feature>
<feature type="region of interest" description="Disordered" evidence="1">
    <location>
        <begin position="100"/>
        <end position="179"/>
    </location>
</feature>
<feature type="compositionally biased region" description="Polar residues" evidence="1">
    <location>
        <begin position="143"/>
        <end position="153"/>
    </location>
</feature>
<feature type="compositionally biased region" description="Polar residues" evidence="1">
    <location>
        <begin position="163"/>
        <end position="179"/>
    </location>
</feature>
<feature type="modified residue" description="N6-acetyllysine" evidence="4">
    <location>
        <position position="43"/>
    </location>
</feature>
<feature type="splice variant" id="VSP_035468" description="In isoform 2." evidence="6">
    <location>
        <begin position="1"/>
        <end position="100"/>
    </location>
</feature>
<feature type="sequence variant" id="VAR_046622" description="In dbSNP:rs6465886.">
    <original>A</original>
    <variation>D</variation>
    <location>
        <position position="45"/>
    </location>
</feature>
<feature type="sequence variant" id="VAR_046623" description="In dbSNP:rs2228687.">
    <original>Q</original>
    <variation>R</variation>
    <location>
        <position position="116"/>
    </location>
</feature>
<feature type="mutagenesis site" description="Abolishes acetylation." evidence="4">
    <original>K</original>
    <variation>R</variation>
    <location>
        <position position="43"/>
    </location>
</feature>
<comment type="function">
    <text evidence="2 3 5">Functions as part of the SSP (stage selector protein) complex, a complex that contributes to the preferential expression of the gamma-gene in fetal erythroid cells by facilitating the interaction of the gamma-globin genes with enhancer elements contained in the locus control region (LCR). The complex binds to the stage selector element (SSE) in the proximal gamma-globin promoter. In contrast, isoform 2 acts as a repressor of gamma-globin gene expression by preventing NFE2 and RNA polymerase II recruitment to the promoter.</text>
</comment>
<comment type="subunit">
    <text evidence="2 4">Component of the SSP (stage selector protein) complex, which appears to be a heteromer of TFCP2 and 2 copies of NFE4. Interacts with HDAC1 and PCAF. Isoform 2 interacts with TFCP2.</text>
</comment>
<comment type="interaction">
    <interactant intactId="EBI-15759783">
        <id>Q86UQ8-1</id>
    </interactant>
    <interactant intactId="EBI-351098">
        <id>O14744</id>
        <label>PRMT5</label>
    </interactant>
    <organismsDiffer>false</organismsDiffer>
    <experiments>2</experiments>
</comment>
<comment type="subcellular location">
    <subcellularLocation>
        <location evidence="6">Nucleus</location>
    </subcellularLocation>
</comment>
<comment type="alternative products">
    <event type="alternative initiation"/>
    <isoform>
        <id>Q86UQ8-1</id>
        <name>1</name>
        <name>p22 NF-E4</name>
        <sequence type="displayed"/>
    </isoform>
    <isoform>
        <id>Q86UQ8-2</id>
        <name>2</name>
        <name>p14 NF-E4</name>
        <sequence type="described" ref="VSP_035468"/>
    </isoform>
</comment>
<comment type="tissue specificity">
    <text evidence="2">Specifically expressed in fetal liver, cord blood and bone marrow. Also expressed in the K562 and HEL cell lines, which constitutively express the fetal globin genes.</text>
</comment>
<comment type="PTM">
    <text evidence="4">Acetylation at Lys-43 prolongs the protein half-life by preventing ubiquitin-mediated degradation and reduces the interaction between NF-E4 and HDAC1, potentially maximizing the activating ability of the factor at the gamma-promoter.</text>
</comment>
<comment type="PTM">
    <text evidence="4">Ubiquitinated; leading to its degradation by the proteasome. Acetylation at Lys-43 prevents ubiquitination.</text>
</comment>
<comment type="sequence caution" evidence="6">
    <conflict type="miscellaneous discrepancy">
        <sequence resource="EMBL-CDS" id="AAP13531"/>
    </conflict>
    <text>Unusual initiator. The initiator methionine is coded by a non-canonical CTG leucine codon.</text>
</comment>
<proteinExistence type="evidence at protein level"/>
<accession>Q86UQ8</accession>
<dbReference type="EMBL" id="AY258907">
    <property type="protein sequence ID" value="AAP13531.1"/>
    <property type="status" value="ALT_SEQ"/>
    <property type="molecule type" value="mRNA"/>
</dbReference>
<dbReference type="EMBL" id="AC073127">
    <property type="status" value="NOT_ANNOTATED_CDS"/>
    <property type="molecule type" value="Genomic_DNA"/>
</dbReference>
<dbReference type="RefSeq" id="NP_001078855.1">
    <property type="nucleotide sequence ID" value="NM_001085386.1"/>
</dbReference>
<dbReference type="BioGRID" id="121800">
    <property type="interactions" value="7"/>
</dbReference>
<dbReference type="CORUM" id="Q86UQ8"/>
<dbReference type="DIP" id="DIP-48507N"/>
<dbReference type="FunCoup" id="Q86UQ8">
    <property type="interactions" value="23"/>
</dbReference>
<dbReference type="IntAct" id="Q86UQ8">
    <property type="interactions" value="3"/>
</dbReference>
<dbReference type="STRING" id="9606.ENSP00000498569"/>
<dbReference type="GlyGen" id="Q86UQ8">
    <property type="glycosylation" value="1 site, 1 O-linked glycan (1 site)"/>
</dbReference>
<dbReference type="iPTMnet" id="Q86UQ8"/>
<dbReference type="PhosphoSitePlus" id="Q86UQ8"/>
<dbReference type="BioMuta" id="NFE4"/>
<dbReference type="DMDM" id="74714021"/>
<dbReference type="DNASU" id="58160"/>
<dbReference type="AGR" id="HGNC:29902"/>
<dbReference type="GeneCards" id="NFE4"/>
<dbReference type="HGNC" id="HGNC:29902">
    <property type="gene designation" value="NFE4"/>
</dbReference>
<dbReference type="MIM" id="612133">
    <property type="type" value="gene"/>
</dbReference>
<dbReference type="neXtProt" id="NX_Q86UQ8"/>
<dbReference type="InParanoid" id="Q86UQ8"/>
<dbReference type="PAN-GO" id="Q86UQ8">
    <property type="GO annotations" value="3 GO annotations based on evolutionary models"/>
</dbReference>
<dbReference type="PathwayCommons" id="Q86UQ8"/>
<dbReference type="SignaLink" id="Q86UQ8"/>
<dbReference type="BioGRID-ORCS" id="58160">
    <property type="hits" value="1 hit in 113 CRISPR screens"/>
</dbReference>
<dbReference type="GenomeRNAi" id="58160"/>
<dbReference type="Pharos" id="Q86UQ8">
    <property type="development level" value="Tbio"/>
</dbReference>
<dbReference type="PRO" id="PR:Q86UQ8"/>
<dbReference type="Proteomes" id="UP000005640">
    <property type="component" value="Unplaced"/>
</dbReference>
<dbReference type="RNAct" id="Q86UQ8">
    <property type="molecule type" value="protein"/>
</dbReference>
<dbReference type="GO" id="GO:0005634">
    <property type="term" value="C:nucleus"/>
    <property type="evidence" value="ECO:0000314"/>
    <property type="project" value="UniProtKB"/>
</dbReference>
<dbReference type="GO" id="GO:0032991">
    <property type="term" value="C:protein-containing complex"/>
    <property type="evidence" value="ECO:0000314"/>
    <property type="project" value="UniProtKB"/>
</dbReference>
<dbReference type="GO" id="GO:0140297">
    <property type="term" value="F:DNA-binding transcription factor binding"/>
    <property type="evidence" value="ECO:0000353"/>
    <property type="project" value="GO_Central"/>
</dbReference>
<dbReference type="GO" id="GO:0042803">
    <property type="term" value="F:protein homodimerization activity"/>
    <property type="evidence" value="ECO:0000314"/>
    <property type="project" value="UniProtKB"/>
</dbReference>
<dbReference type="GO" id="GO:0003712">
    <property type="term" value="F:transcription coregulator activity"/>
    <property type="evidence" value="ECO:0000314"/>
    <property type="project" value="GO_Central"/>
</dbReference>
<dbReference type="GO" id="GO:0045944">
    <property type="term" value="P:positive regulation of transcription by RNA polymerase II"/>
    <property type="evidence" value="ECO:0000314"/>
    <property type="project" value="UniProtKB"/>
</dbReference>
<dbReference type="GO" id="GO:0065003">
    <property type="term" value="P:protein-containing complex assembly"/>
    <property type="evidence" value="ECO:0000314"/>
    <property type="project" value="UniProtKB"/>
</dbReference>
<dbReference type="GO" id="GO:0006355">
    <property type="term" value="P:regulation of DNA-templated transcription"/>
    <property type="evidence" value="ECO:0000314"/>
    <property type="project" value="UniProtKB"/>
</dbReference>
<dbReference type="GO" id="GO:0006357">
    <property type="term" value="P:regulation of transcription by RNA polymerase II"/>
    <property type="evidence" value="ECO:0000315"/>
    <property type="project" value="UniProtKB"/>
</dbReference>
<protein>
    <recommendedName>
        <fullName>Transcription factor NF-E4</fullName>
    </recommendedName>
</protein>
<name>NFE4_HUMAN</name>